<evidence type="ECO:0000250" key="1"/>
<evidence type="ECO:0000305" key="2"/>
<organism>
    <name type="scientific">Chlamydia trachomatis serovar D (strain ATCC VR-885 / DSM 19411 / UW-3/Cx)</name>
    <dbReference type="NCBI Taxonomy" id="272561"/>
    <lineage>
        <taxon>Bacteria</taxon>
        <taxon>Pseudomonadati</taxon>
        <taxon>Chlamydiota</taxon>
        <taxon>Chlamydiia</taxon>
        <taxon>Chlamydiales</taxon>
        <taxon>Chlamydiaceae</taxon>
        <taxon>Chlamydia/Chlamydophila group</taxon>
        <taxon>Chlamydia</taxon>
    </lineage>
</organism>
<accession>O84693</accession>
<proteinExistence type="inferred from homology"/>
<feature type="chain" id="PRO_0000150297" description="Probable cysteine desulfurase">
    <location>
        <begin position="1"/>
        <end position="401"/>
    </location>
</feature>
<feature type="active site" description="Cysteine persulfide intermediate" evidence="1">
    <location>
        <position position="358"/>
    </location>
</feature>
<feature type="modified residue" description="N6-(pyridoxal phosphate)lysine" evidence="1">
    <location>
        <position position="219"/>
    </location>
</feature>
<sequence length="401" mass="43747">MYNVKKDFPIFKNQGDPYVYLDSAATTHKPQCVIDSIVDYYSSSYATVNRALYTASHDITFAHWQVRSKVGSWIGAQYDQEIIFTRGTTSSLNLLAIAANDSWLAGGTVVISEAEHHANLVSWELACQRSGATIKKVRVDDEGMVDCSHLEQLLKQGVQLVSLAHVSNVSGAVLPLPEIAHLVHRYEALFAVDGAQGVGKGPLNLSEWGVDFYAFSGHKLYAPTGIGVLYGKKELLESLPPVEGGGDMVIVYDFEELSYQEPPLRFEAGTPHIAGVLGLGAAIDYLQALPFSITDRLTELTHFLYEQLLTVPGIQIIGPKQGAARGSLCSISIPGVQASDLGFLLDGRGISVRSGHQCSQPAMVRWDLGHVLRASLGIYNEQQDILLFVEALKDILRAYRS</sequence>
<comment type="function">
    <text evidence="1">Catalyzes the removal of elemental sulfur and selenium atoms from L-cysteine, L-cystine, L-selenocysteine, and L-selenocystine to produce L-alanine.</text>
</comment>
<comment type="catalytic activity">
    <reaction>
        <text>(sulfur carrier)-H + L-cysteine = (sulfur carrier)-SH + L-alanine</text>
        <dbReference type="Rhea" id="RHEA:43892"/>
        <dbReference type="Rhea" id="RHEA-COMP:14737"/>
        <dbReference type="Rhea" id="RHEA-COMP:14739"/>
        <dbReference type="ChEBI" id="CHEBI:29917"/>
        <dbReference type="ChEBI" id="CHEBI:35235"/>
        <dbReference type="ChEBI" id="CHEBI:57972"/>
        <dbReference type="ChEBI" id="CHEBI:64428"/>
        <dbReference type="EC" id="2.8.1.7"/>
    </reaction>
</comment>
<comment type="cofactor">
    <cofactor evidence="1">
        <name>pyridoxal 5'-phosphate</name>
        <dbReference type="ChEBI" id="CHEBI:597326"/>
    </cofactor>
</comment>
<comment type="similarity">
    <text evidence="2">Belongs to the class-V pyridoxal-phosphate-dependent aminotransferase family. Csd subfamily.</text>
</comment>
<name>CSD_CHLTR</name>
<keyword id="KW-0663">Pyridoxal phosphate</keyword>
<keyword id="KW-1185">Reference proteome</keyword>
<keyword id="KW-0808">Transferase</keyword>
<gene>
    <name type="primary">csd</name>
    <name type="ordered locus">CT_687</name>
</gene>
<reference key="1">
    <citation type="journal article" date="1998" name="Science">
        <title>Genome sequence of an obligate intracellular pathogen of humans: Chlamydia trachomatis.</title>
        <authorList>
            <person name="Stephens R.S."/>
            <person name="Kalman S."/>
            <person name="Lammel C.J."/>
            <person name="Fan J."/>
            <person name="Marathe R."/>
            <person name="Aravind L."/>
            <person name="Mitchell W.P."/>
            <person name="Olinger L."/>
            <person name="Tatusov R.L."/>
            <person name="Zhao Q."/>
            <person name="Koonin E.V."/>
            <person name="Davis R.W."/>
        </authorList>
    </citation>
    <scope>NUCLEOTIDE SEQUENCE [LARGE SCALE GENOMIC DNA]</scope>
    <source>
        <strain>ATCC VR-885 / DSM 19411 / UW-3/Cx</strain>
    </source>
</reference>
<dbReference type="EC" id="2.8.1.7"/>
<dbReference type="EMBL" id="AE001273">
    <property type="protein sequence ID" value="AAC68282.1"/>
    <property type="molecule type" value="Genomic_DNA"/>
</dbReference>
<dbReference type="PIR" id="C71483">
    <property type="entry name" value="C71483"/>
</dbReference>
<dbReference type="RefSeq" id="NP_220206.1">
    <property type="nucleotide sequence ID" value="NC_000117.1"/>
</dbReference>
<dbReference type="RefSeq" id="WP_009872062.1">
    <property type="nucleotide sequence ID" value="NC_000117.1"/>
</dbReference>
<dbReference type="SMR" id="O84693"/>
<dbReference type="FunCoup" id="O84693">
    <property type="interactions" value="240"/>
</dbReference>
<dbReference type="STRING" id="272561.CT_687"/>
<dbReference type="EnsemblBacteria" id="AAC68282">
    <property type="protein sequence ID" value="AAC68282"/>
    <property type="gene ID" value="CT_687"/>
</dbReference>
<dbReference type="GeneID" id="884483"/>
<dbReference type="KEGG" id="ctr:CT_687"/>
<dbReference type="PATRIC" id="fig|272561.5.peg.756"/>
<dbReference type="HOGENOM" id="CLU_003433_2_5_0"/>
<dbReference type="InParanoid" id="O84693"/>
<dbReference type="OrthoDB" id="9808002at2"/>
<dbReference type="Proteomes" id="UP000000431">
    <property type="component" value="Chromosome"/>
</dbReference>
<dbReference type="GO" id="GO:0031071">
    <property type="term" value="F:cysteine desulfurase activity"/>
    <property type="evidence" value="ECO:0007669"/>
    <property type="project" value="UniProtKB-EC"/>
</dbReference>
<dbReference type="GO" id="GO:0030170">
    <property type="term" value="F:pyridoxal phosphate binding"/>
    <property type="evidence" value="ECO:0007669"/>
    <property type="project" value="InterPro"/>
</dbReference>
<dbReference type="GO" id="GO:0006534">
    <property type="term" value="P:cysteine metabolic process"/>
    <property type="evidence" value="ECO:0007669"/>
    <property type="project" value="InterPro"/>
</dbReference>
<dbReference type="CDD" id="cd06453">
    <property type="entry name" value="SufS_like"/>
    <property type="match status" value="1"/>
</dbReference>
<dbReference type="Gene3D" id="3.90.1150.10">
    <property type="entry name" value="Aspartate Aminotransferase, domain 1"/>
    <property type="match status" value="1"/>
</dbReference>
<dbReference type="Gene3D" id="3.40.640.10">
    <property type="entry name" value="Type I PLP-dependent aspartate aminotransferase-like (Major domain)"/>
    <property type="match status" value="1"/>
</dbReference>
<dbReference type="InterPro" id="IPR000192">
    <property type="entry name" value="Aminotrans_V_dom"/>
</dbReference>
<dbReference type="InterPro" id="IPR020578">
    <property type="entry name" value="Aminotrans_V_PyrdxlP_BS"/>
</dbReference>
<dbReference type="InterPro" id="IPR010970">
    <property type="entry name" value="Cys_dSase_SufS"/>
</dbReference>
<dbReference type="InterPro" id="IPR016454">
    <property type="entry name" value="Cysteine_dSase"/>
</dbReference>
<dbReference type="InterPro" id="IPR015424">
    <property type="entry name" value="PyrdxlP-dep_Trfase"/>
</dbReference>
<dbReference type="InterPro" id="IPR015421">
    <property type="entry name" value="PyrdxlP-dep_Trfase_major"/>
</dbReference>
<dbReference type="InterPro" id="IPR015422">
    <property type="entry name" value="PyrdxlP-dep_Trfase_small"/>
</dbReference>
<dbReference type="NCBIfam" id="TIGR01979">
    <property type="entry name" value="sufS"/>
    <property type="match status" value="1"/>
</dbReference>
<dbReference type="PANTHER" id="PTHR43586">
    <property type="entry name" value="CYSTEINE DESULFURASE"/>
    <property type="match status" value="1"/>
</dbReference>
<dbReference type="PANTHER" id="PTHR43586:SF8">
    <property type="entry name" value="CYSTEINE DESULFURASE 1, CHLOROPLASTIC"/>
    <property type="match status" value="1"/>
</dbReference>
<dbReference type="Pfam" id="PF00266">
    <property type="entry name" value="Aminotran_5"/>
    <property type="match status" value="1"/>
</dbReference>
<dbReference type="PIRSF" id="PIRSF005572">
    <property type="entry name" value="NifS"/>
    <property type="match status" value="1"/>
</dbReference>
<dbReference type="SUPFAM" id="SSF53383">
    <property type="entry name" value="PLP-dependent transferases"/>
    <property type="match status" value="1"/>
</dbReference>
<dbReference type="PROSITE" id="PS00595">
    <property type="entry name" value="AA_TRANSFER_CLASS_5"/>
    <property type="match status" value="1"/>
</dbReference>
<protein>
    <recommendedName>
        <fullName>Probable cysteine desulfurase</fullName>
        <ecNumber>2.8.1.7</ecNumber>
    </recommendedName>
</protein>